<organism>
    <name type="scientific">Methanosphaera stadtmanae (strain ATCC 43021 / DSM 3091 / JCM 11832 / MCB-3)</name>
    <dbReference type="NCBI Taxonomy" id="339860"/>
    <lineage>
        <taxon>Archaea</taxon>
        <taxon>Methanobacteriati</taxon>
        <taxon>Methanobacteriota</taxon>
        <taxon>Methanomada group</taxon>
        <taxon>Methanobacteria</taxon>
        <taxon>Methanobacteriales</taxon>
        <taxon>Methanobacteriaceae</taxon>
        <taxon>Methanosphaera</taxon>
    </lineage>
</organism>
<comment type="function">
    <text evidence="1">Major role in the synthesis of nucleoside triphosphates other than ATP. The ATP gamma phosphate is transferred to the NDP beta phosphate via a ping-pong mechanism, using a phosphorylated active-site intermediate.</text>
</comment>
<comment type="catalytic activity">
    <reaction evidence="1">
        <text>a 2'-deoxyribonucleoside 5'-diphosphate + ATP = a 2'-deoxyribonucleoside 5'-triphosphate + ADP</text>
        <dbReference type="Rhea" id="RHEA:44640"/>
        <dbReference type="ChEBI" id="CHEBI:30616"/>
        <dbReference type="ChEBI" id="CHEBI:61560"/>
        <dbReference type="ChEBI" id="CHEBI:73316"/>
        <dbReference type="ChEBI" id="CHEBI:456216"/>
        <dbReference type="EC" id="2.7.4.6"/>
    </reaction>
</comment>
<comment type="catalytic activity">
    <reaction evidence="1">
        <text>a ribonucleoside 5'-diphosphate + ATP = a ribonucleoside 5'-triphosphate + ADP</text>
        <dbReference type="Rhea" id="RHEA:18113"/>
        <dbReference type="ChEBI" id="CHEBI:30616"/>
        <dbReference type="ChEBI" id="CHEBI:57930"/>
        <dbReference type="ChEBI" id="CHEBI:61557"/>
        <dbReference type="ChEBI" id="CHEBI:456216"/>
        <dbReference type="EC" id="2.7.4.6"/>
    </reaction>
</comment>
<comment type="cofactor">
    <cofactor evidence="1">
        <name>Mg(2+)</name>
        <dbReference type="ChEBI" id="CHEBI:18420"/>
    </cofactor>
</comment>
<comment type="subcellular location">
    <subcellularLocation>
        <location evidence="1">Cytoplasm</location>
    </subcellularLocation>
</comment>
<comment type="similarity">
    <text evidence="1">Belongs to the NDK family.</text>
</comment>
<gene>
    <name evidence="1" type="primary">ndk</name>
    <name type="ordered locus">Msp_0630</name>
</gene>
<accession>Q2NGM5</accession>
<keyword id="KW-0067">ATP-binding</keyword>
<keyword id="KW-0963">Cytoplasm</keyword>
<keyword id="KW-0418">Kinase</keyword>
<keyword id="KW-0460">Magnesium</keyword>
<keyword id="KW-0479">Metal-binding</keyword>
<keyword id="KW-0546">Nucleotide metabolism</keyword>
<keyword id="KW-0547">Nucleotide-binding</keyword>
<keyword id="KW-0597">Phosphoprotein</keyword>
<keyword id="KW-1185">Reference proteome</keyword>
<keyword id="KW-0808">Transferase</keyword>
<name>NDK_METST</name>
<evidence type="ECO:0000255" key="1">
    <source>
        <dbReference type="HAMAP-Rule" id="MF_00451"/>
    </source>
</evidence>
<proteinExistence type="inferred from homology"/>
<protein>
    <recommendedName>
        <fullName evidence="1">Nucleoside diphosphate kinase</fullName>
        <shortName evidence="1">NDK</shortName>
        <shortName evidence="1">NDP kinase</shortName>
        <ecNumber evidence="1">2.7.4.6</ecNumber>
    </recommendedName>
    <alternativeName>
        <fullName evidence="1">Nucleoside-2-P kinase</fullName>
    </alternativeName>
</protein>
<reference key="1">
    <citation type="journal article" date="2006" name="J. Bacteriol.">
        <title>The genome sequence of Methanosphaera stadtmanae reveals why this human intestinal archaeon is restricted to methanol and H2 for methane formation and ATP synthesis.</title>
        <authorList>
            <person name="Fricke W.F."/>
            <person name="Seedorf H."/>
            <person name="Henne A."/>
            <person name="Kruer M."/>
            <person name="Liesegang H."/>
            <person name="Hedderich R."/>
            <person name="Gottschalk G."/>
            <person name="Thauer R.K."/>
        </authorList>
    </citation>
    <scope>NUCLEOTIDE SEQUENCE [LARGE SCALE GENOMIC DNA]</scope>
    <source>
        <strain>ATCC 43021 / DSM 3091 / JCM 11832 / MCB-3</strain>
    </source>
</reference>
<dbReference type="EC" id="2.7.4.6" evidence="1"/>
<dbReference type="EMBL" id="CP000102">
    <property type="protein sequence ID" value="ABC57028.1"/>
    <property type="molecule type" value="Genomic_DNA"/>
</dbReference>
<dbReference type="RefSeq" id="WP_011406228.1">
    <property type="nucleotide sequence ID" value="NC_007681.1"/>
</dbReference>
<dbReference type="SMR" id="Q2NGM5"/>
<dbReference type="STRING" id="339860.Msp_0630"/>
<dbReference type="GeneID" id="41325206"/>
<dbReference type="KEGG" id="mst:Msp_0630"/>
<dbReference type="eggNOG" id="arCOG04313">
    <property type="taxonomic scope" value="Archaea"/>
</dbReference>
<dbReference type="HOGENOM" id="CLU_060216_6_3_2"/>
<dbReference type="OrthoDB" id="6874at2157"/>
<dbReference type="Proteomes" id="UP000001931">
    <property type="component" value="Chromosome"/>
</dbReference>
<dbReference type="GO" id="GO:0005737">
    <property type="term" value="C:cytoplasm"/>
    <property type="evidence" value="ECO:0007669"/>
    <property type="project" value="UniProtKB-SubCell"/>
</dbReference>
<dbReference type="GO" id="GO:0005524">
    <property type="term" value="F:ATP binding"/>
    <property type="evidence" value="ECO:0007669"/>
    <property type="project" value="UniProtKB-UniRule"/>
</dbReference>
<dbReference type="GO" id="GO:0046872">
    <property type="term" value="F:metal ion binding"/>
    <property type="evidence" value="ECO:0007669"/>
    <property type="project" value="UniProtKB-KW"/>
</dbReference>
<dbReference type="GO" id="GO:0004550">
    <property type="term" value="F:nucleoside diphosphate kinase activity"/>
    <property type="evidence" value="ECO:0007669"/>
    <property type="project" value="UniProtKB-UniRule"/>
</dbReference>
<dbReference type="GO" id="GO:0006241">
    <property type="term" value="P:CTP biosynthetic process"/>
    <property type="evidence" value="ECO:0007669"/>
    <property type="project" value="UniProtKB-UniRule"/>
</dbReference>
<dbReference type="GO" id="GO:0006183">
    <property type="term" value="P:GTP biosynthetic process"/>
    <property type="evidence" value="ECO:0007669"/>
    <property type="project" value="UniProtKB-UniRule"/>
</dbReference>
<dbReference type="GO" id="GO:0006228">
    <property type="term" value="P:UTP biosynthetic process"/>
    <property type="evidence" value="ECO:0007669"/>
    <property type="project" value="UniProtKB-UniRule"/>
</dbReference>
<dbReference type="CDD" id="cd04413">
    <property type="entry name" value="NDPk_I"/>
    <property type="match status" value="1"/>
</dbReference>
<dbReference type="FunFam" id="3.30.70.141:FF:000003">
    <property type="entry name" value="Nucleoside diphosphate kinase"/>
    <property type="match status" value="1"/>
</dbReference>
<dbReference type="Gene3D" id="3.30.70.141">
    <property type="entry name" value="Nucleoside diphosphate kinase-like domain"/>
    <property type="match status" value="1"/>
</dbReference>
<dbReference type="HAMAP" id="MF_00451">
    <property type="entry name" value="NDP_kinase"/>
    <property type="match status" value="1"/>
</dbReference>
<dbReference type="InterPro" id="IPR034907">
    <property type="entry name" value="NDK-like_dom"/>
</dbReference>
<dbReference type="InterPro" id="IPR036850">
    <property type="entry name" value="NDK-like_dom_sf"/>
</dbReference>
<dbReference type="InterPro" id="IPR001564">
    <property type="entry name" value="Nucleoside_diP_kinase"/>
</dbReference>
<dbReference type="InterPro" id="IPR023005">
    <property type="entry name" value="Nucleoside_diP_kinase_AS"/>
</dbReference>
<dbReference type="NCBIfam" id="NF001908">
    <property type="entry name" value="PRK00668.1"/>
    <property type="match status" value="1"/>
</dbReference>
<dbReference type="PANTHER" id="PTHR11349">
    <property type="entry name" value="NUCLEOSIDE DIPHOSPHATE KINASE"/>
    <property type="match status" value="1"/>
</dbReference>
<dbReference type="Pfam" id="PF00334">
    <property type="entry name" value="NDK"/>
    <property type="match status" value="1"/>
</dbReference>
<dbReference type="PRINTS" id="PR01243">
    <property type="entry name" value="NUCDPKINASE"/>
</dbReference>
<dbReference type="SMART" id="SM00562">
    <property type="entry name" value="NDK"/>
    <property type="match status" value="1"/>
</dbReference>
<dbReference type="SUPFAM" id="SSF54919">
    <property type="entry name" value="Nucleoside diphosphate kinase, NDK"/>
    <property type="match status" value="1"/>
</dbReference>
<dbReference type="PROSITE" id="PS00469">
    <property type="entry name" value="NDPK"/>
    <property type="match status" value="1"/>
</dbReference>
<dbReference type="PROSITE" id="PS51374">
    <property type="entry name" value="NDPK_LIKE"/>
    <property type="match status" value="1"/>
</dbReference>
<feature type="chain" id="PRO_0000242527" description="Nucleoside diphosphate kinase">
    <location>
        <begin position="1"/>
        <end position="152"/>
    </location>
</feature>
<feature type="active site" description="Pros-phosphohistidine intermediate" evidence="1">
    <location>
        <position position="116"/>
    </location>
</feature>
<feature type="binding site" evidence="1">
    <location>
        <position position="10"/>
    </location>
    <ligand>
        <name>ATP</name>
        <dbReference type="ChEBI" id="CHEBI:30616"/>
    </ligand>
</feature>
<feature type="binding site" evidence="1">
    <location>
        <position position="58"/>
    </location>
    <ligand>
        <name>ATP</name>
        <dbReference type="ChEBI" id="CHEBI:30616"/>
    </ligand>
</feature>
<feature type="binding site" evidence="1">
    <location>
        <position position="86"/>
    </location>
    <ligand>
        <name>ATP</name>
        <dbReference type="ChEBI" id="CHEBI:30616"/>
    </ligand>
</feature>
<feature type="binding site" evidence="1">
    <location>
        <position position="92"/>
    </location>
    <ligand>
        <name>ATP</name>
        <dbReference type="ChEBI" id="CHEBI:30616"/>
    </ligand>
</feature>
<feature type="binding site" evidence="1">
    <location>
        <position position="103"/>
    </location>
    <ligand>
        <name>ATP</name>
        <dbReference type="ChEBI" id="CHEBI:30616"/>
    </ligand>
</feature>
<feature type="binding site" evidence="1">
    <location>
        <position position="113"/>
    </location>
    <ligand>
        <name>ATP</name>
        <dbReference type="ChEBI" id="CHEBI:30616"/>
    </ligand>
</feature>
<sequence>MKQRTFTMLKPDAVKRRLTGEILTRFEKRGLKVIAAKTLMISEDLAKTHYGEHSDKPFFNDLISYITSGPVFAMVLEGDDVISLVRKMVGATNPKEADIGTIRGDYGIDTGRNIVHASDSEESAQREINLFFDETEFCDYELPDEDIIYEEP</sequence>